<organism>
    <name type="scientific">Rhodobacter capsulatus (strain ATCC BAA-309 / NBRC 16581 / SB1003)</name>
    <dbReference type="NCBI Taxonomy" id="272942"/>
    <lineage>
        <taxon>Bacteria</taxon>
        <taxon>Pseudomonadati</taxon>
        <taxon>Pseudomonadota</taxon>
        <taxon>Alphaproteobacteria</taxon>
        <taxon>Rhodobacterales</taxon>
        <taxon>Rhodobacter group</taxon>
        <taxon>Rhodobacter</taxon>
    </lineage>
</organism>
<keyword id="KW-0077">Bacteriochlorophyll biosynthesis</keyword>
<keyword id="KW-0149">Chlorophyll biosynthesis</keyword>
<keyword id="KW-0472">Membrane</keyword>
<keyword id="KW-0602">Photosynthesis</keyword>
<keyword id="KW-1185">Reference proteome</keyword>
<keyword id="KW-0812">Transmembrane</keyword>
<keyword id="KW-1133">Transmembrane helix</keyword>
<proteinExistence type="inferred from homology"/>
<sequence length="428" mass="44455">MTLGWLQIFRLGLVQLCIGAVVVLTTSTLNRLMVVELALPAVLPGALVALHYGLQIARPAWGLRSDTKGNRTFFVILGMAVLALGAFLAAVAVVLFPLAWGQALLLSVFAYVLIGFGVGASGTSLLALLASATEPRRRAAAATITWLLMIFGIAVTAGTVGHFLDPYSPERLLWIVAIVTLGAVVLTTLAVWGIERRLDHPVPEDTPPRLLEGLREVWAEPQARAFTFFLFLSMTAYFLQELILEPYAGLVFGFTAGETTKLSGMQNGGVFFGMLTVGLALSGLKIGSLRGWVVTGCLGSSLALMAIVALGHLPGAALVPAVIGLGFFNGIFAVAAIGAMMALAGEGRSSREGTRMGLWGAAQAIAAGFGGLVGAGAADLMRLFLPDATAFGLVFGAQALLFIVAAMMATGVVAARGAARVPTVMAGE</sequence>
<dbReference type="EMBL" id="Z11165">
    <property type="protein sequence ID" value="CAA77533.1"/>
    <property type="molecule type" value="Genomic_DNA"/>
</dbReference>
<dbReference type="EMBL" id="CP001312">
    <property type="protein sequence ID" value="ADE84437.1"/>
    <property type="molecule type" value="Genomic_DNA"/>
</dbReference>
<dbReference type="PIR" id="S17817">
    <property type="entry name" value="S17817"/>
</dbReference>
<dbReference type="RefSeq" id="WP_013066416.1">
    <property type="nucleotide sequence ID" value="NC_014034.1"/>
</dbReference>
<dbReference type="SMR" id="P26171"/>
<dbReference type="STRING" id="272942.RCAP_rcc00672"/>
<dbReference type="TCDB" id="2.A.1.41.3">
    <property type="family name" value="the major facilitator superfamily (mfs)"/>
</dbReference>
<dbReference type="GeneID" id="31489618"/>
<dbReference type="KEGG" id="rcp:RCAP_rcc00672"/>
<dbReference type="eggNOG" id="COG2211">
    <property type="taxonomic scope" value="Bacteria"/>
</dbReference>
<dbReference type="HOGENOM" id="CLU_030017_1_0_5"/>
<dbReference type="OrthoDB" id="5800821at2"/>
<dbReference type="UniPathway" id="UPA00671"/>
<dbReference type="Proteomes" id="UP000002361">
    <property type="component" value="Chromosome"/>
</dbReference>
<dbReference type="GO" id="GO:0016020">
    <property type="term" value="C:membrane"/>
    <property type="evidence" value="ECO:0007669"/>
    <property type="project" value="UniProtKB-SubCell"/>
</dbReference>
<dbReference type="GO" id="GO:0022857">
    <property type="term" value="F:transmembrane transporter activity"/>
    <property type="evidence" value="ECO:0007669"/>
    <property type="project" value="InterPro"/>
</dbReference>
<dbReference type="GO" id="GO:0036070">
    <property type="term" value="P:light-independent bacteriochlorophyll biosynthetic process"/>
    <property type="evidence" value="ECO:0007669"/>
    <property type="project" value="UniProtKB-UniPathway"/>
</dbReference>
<dbReference type="GO" id="GO:0015979">
    <property type="term" value="P:photosynthesis"/>
    <property type="evidence" value="ECO:0007669"/>
    <property type="project" value="UniProtKB-KW"/>
</dbReference>
<dbReference type="CDD" id="cd06176">
    <property type="entry name" value="MFS_BCD_PucC-like"/>
    <property type="match status" value="1"/>
</dbReference>
<dbReference type="Gene3D" id="1.20.1250.20">
    <property type="entry name" value="MFS general substrate transporter like domains"/>
    <property type="match status" value="1"/>
</dbReference>
<dbReference type="InterPro" id="IPR020846">
    <property type="entry name" value="MFS_dom"/>
</dbReference>
<dbReference type="InterPro" id="IPR036259">
    <property type="entry name" value="MFS_trans_sf"/>
</dbReference>
<dbReference type="InterPro" id="IPR026036">
    <property type="entry name" value="PucC"/>
</dbReference>
<dbReference type="InterPro" id="IPR004896">
    <property type="entry name" value="PucC-rel"/>
</dbReference>
<dbReference type="PANTHER" id="PTHR23538">
    <property type="entry name" value="44.5 KD BACTERIOCHLOROPHYLL SYNTHASE SUBUNIT"/>
    <property type="match status" value="1"/>
</dbReference>
<dbReference type="PANTHER" id="PTHR23538:SF1">
    <property type="entry name" value="44.5 KD BACTERIOCHLOROPHYLL SYNTHASE SUBUNIT"/>
    <property type="match status" value="1"/>
</dbReference>
<dbReference type="Pfam" id="PF03209">
    <property type="entry name" value="PUCC"/>
    <property type="match status" value="1"/>
</dbReference>
<dbReference type="PIRSF" id="PIRSF016565">
    <property type="entry name" value="PucC"/>
    <property type="match status" value="1"/>
</dbReference>
<dbReference type="SUPFAM" id="SSF103473">
    <property type="entry name" value="MFS general substrate transporter"/>
    <property type="match status" value="1"/>
</dbReference>
<dbReference type="PROSITE" id="PS50850">
    <property type="entry name" value="MFS"/>
    <property type="match status" value="1"/>
</dbReference>
<protein>
    <recommendedName>
        <fullName>Bacteriochlorophyll synthase 44.5 kDa chain</fullName>
    </recommendedName>
</protein>
<accession>P26171</accession>
<accession>D5ANT3</accession>
<name>BCH2_RHOCB</name>
<comment type="pathway">
    <text>Porphyrin-containing compound metabolism; bacteriochlorophyll biosynthesis (light-independent).</text>
</comment>
<comment type="subcellular location">
    <subcellularLocation>
        <location evidence="2">Membrane</location>
        <topology evidence="2">Multi-pass membrane protein</topology>
    </subcellularLocation>
</comment>
<comment type="similarity">
    <text evidence="2">Belongs to the PucC family.</text>
</comment>
<feature type="chain" id="PRO_0000084836" description="Bacteriochlorophyll synthase 44.5 kDa chain">
    <location>
        <begin position="1"/>
        <end position="428"/>
    </location>
</feature>
<feature type="transmembrane region" description="Helical" evidence="1">
    <location>
        <begin position="3"/>
        <end position="23"/>
    </location>
</feature>
<feature type="transmembrane region" description="Helical" evidence="1">
    <location>
        <begin position="32"/>
        <end position="52"/>
    </location>
</feature>
<feature type="transmembrane region" description="Helical" evidence="1">
    <location>
        <begin position="73"/>
        <end position="93"/>
    </location>
</feature>
<feature type="transmembrane region" description="Helical" evidence="1">
    <location>
        <begin position="115"/>
        <end position="135"/>
    </location>
</feature>
<feature type="transmembrane region" description="Helical" evidence="1">
    <location>
        <begin position="144"/>
        <end position="164"/>
    </location>
</feature>
<feature type="transmembrane region" description="Helical" evidence="1">
    <location>
        <begin position="172"/>
        <end position="192"/>
    </location>
</feature>
<feature type="transmembrane region" description="Helical" evidence="1">
    <location>
        <begin position="225"/>
        <end position="245"/>
    </location>
</feature>
<feature type="transmembrane region" description="Helical" evidence="1">
    <location>
        <begin position="269"/>
        <end position="289"/>
    </location>
</feature>
<feature type="transmembrane region" description="Helical" evidence="1">
    <location>
        <begin position="291"/>
        <end position="311"/>
    </location>
</feature>
<feature type="transmembrane region" description="Helical" evidence="1">
    <location>
        <begin position="317"/>
        <end position="337"/>
    </location>
</feature>
<feature type="transmembrane region" description="Helical" evidence="1">
    <location>
        <begin position="358"/>
        <end position="378"/>
    </location>
</feature>
<feature type="transmembrane region" description="Helical" evidence="1">
    <location>
        <begin position="393"/>
        <end position="413"/>
    </location>
</feature>
<reference key="1">
    <citation type="submission" date="1991-11" db="EMBL/GenBank/DDBJ databases">
        <authorList>
            <person name="Burke D.H."/>
            <person name="Alberti M."/>
            <person name="Armstrong G.A."/>
            <person name="Hearst J.E."/>
        </authorList>
    </citation>
    <scope>NUCLEOTIDE SEQUENCE [GENOMIC DNA]</scope>
    <source>
        <strain>ATCC BAA-309 / NBRC 16581 / SB1003</strain>
    </source>
</reference>
<reference key="2">
    <citation type="journal article" date="2010" name="J. Bacteriol.">
        <title>Complete genome sequence of the photosynthetic purple nonsulfur bacterium Rhodobacter capsulatus SB 1003.</title>
        <authorList>
            <person name="Strnad H."/>
            <person name="Lapidus A."/>
            <person name="Paces J."/>
            <person name="Ulbrich P."/>
            <person name="Vlcek C."/>
            <person name="Paces V."/>
            <person name="Haselkorn R."/>
        </authorList>
    </citation>
    <scope>NUCLEOTIDE SEQUENCE [LARGE SCALE GENOMIC DNA]</scope>
    <source>
        <strain>ATCC BAA-309 / NBRC 16581 / SB1003</strain>
    </source>
</reference>
<evidence type="ECO:0000255" key="1"/>
<evidence type="ECO:0000305" key="2"/>
<gene>
    <name type="ordered locus">RCAP_rcc00672</name>
</gene>